<proteinExistence type="inferred from homology"/>
<keyword id="KW-0963">Cytoplasm</keyword>
<keyword id="KW-0251">Elongation factor</keyword>
<keyword id="KW-0648">Protein biosynthesis</keyword>
<evidence type="ECO:0000255" key="1">
    <source>
        <dbReference type="HAMAP-Rule" id="MF_00050"/>
    </source>
</evidence>
<feature type="chain" id="PRO_1000006075" description="Elongation factor Ts">
    <location>
        <begin position="1"/>
        <end position="275"/>
    </location>
</feature>
<feature type="region of interest" description="Involved in Mg(2+) ion dislocation from EF-Tu" evidence="1">
    <location>
        <begin position="80"/>
        <end position="83"/>
    </location>
</feature>
<dbReference type="EMBL" id="AM711867">
    <property type="protein sequence ID" value="CAN01429.1"/>
    <property type="molecule type" value="Genomic_DNA"/>
</dbReference>
<dbReference type="RefSeq" id="WP_012038070.1">
    <property type="nucleotide sequence ID" value="NC_009480.1"/>
</dbReference>
<dbReference type="SMR" id="A5CQS1"/>
<dbReference type="GeneID" id="92947355"/>
<dbReference type="KEGG" id="cmi:CMM_1384"/>
<dbReference type="eggNOG" id="COG0264">
    <property type="taxonomic scope" value="Bacteria"/>
</dbReference>
<dbReference type="HOGENOM" id="CLU_047155_0_0_11"/>
<dbReference type="OrthoDB" id="9808348at2"/>
<dbReference type="Proteomes" id="UP000001564">
    <property type="component" value="Chromosome"/>
</dbReference>
<dbReference type="GO" id="GO:0005737">
    <property type="term" value="C:cytoplasm"/>
    <property type="evidence" value="ECO:0007669"/>
    <property type="project" value="UniProtKB-SubCell"/>
</dbReference>
<dbReference type="GO" id="GO:0003746">
    <property type="term" value="F:translation elongation factor activity"/>
    <property type="evidence" value="ECO:0007669"/>
    <property type="project" value="UniProtKB-UniRule"/>
</dbReference>
<dbReference type="CDD" id="cd14275">
    <property type="entry name" value="UBA_EF-Ts"/>
    <property type="match status" value="1"/>
</dbReference>
<dbReference type="FunFam" id="1.10.286.20:FF:000001">
    <property type="entry name" value="Elongation factor Ts"/>
    <property type="match status" value="1"/>
</dbReference>
<dbReference type="FunFam" id="1.10.8.10:FF:000001">
    <property type="entry name" value="Elongation factor Ts"/>
    <property type="match status" value="1"/>
</dbReference>
<dbReference type="Gene3D" id="1.10.286.20">
    <property type="match status" value="1"/>
</dbReference>
<dbReference type="Gene3D" id="1.10.8.10">
    <property type="entry name" value="DNA helicase RuvA subunit, C-terminal domain"/>
    <property type="match status" value="1"/>
</dbReference>
<dbReference type="Gene3D" id="3.30.479.20">
    <property type="entry name" value="Elongation factor Ts, dimerisation domain"/>
    <property type="match status" value="2"/>
</dbReference>
<dbReference type="HAMAP" id="MF_00050">
    <property type="entry name" value="EF_Ts"/>
    <property type="match status" value="1"/>
</dbReference>
<dbReference type="InterPro" id="IPR036402">
    <property type="entry name" value="EF-Ts_dimer_sf"/>
</dbReference>
<dbReference type="InterPro" id="IPR001816">
    <property type="entry name" value="Transl_elong_EFTs/EF1B"/>
</dbReference>
<dbReference type="InterPro" id="IPR014039">
    <property type="entry name" value="Transl_elong_EFTs/EF1B_dimer"/>
</dbReference>
<dbReference type="InterPro" id="IPR009060">
    <property type="entry name" value="UBA-like_sf"/>
</dbReference>
<dbReference type="NCBIfam" id="TIGR00116">
    <property type="entry name" value="tsf"/>
    <property type="match status" value="1"/>
</dbReference>
<dbReference type="PANTHER" id="PTHR11741">
    <property type="entry name" value="ELONGATION FACTOR TS"/>
    <property type="match status" value="1"/>
</dbReference>
<dbReference type="PANTHER" id="PTHR11741:SF0">
    <property type="entry name" value="ELONGATION FACTOR TS, MITOCHONDRIAL"/>
    <property type="match status" value="1"/>
</dbReference>
<dbReference type="Pfam" id="PF00889">
    <property type="entry name" value="EF_TS"/>
    <property type="match status" value="1"/>
</dbReference>
<dbReference type="SUPFAM" id="SSF54713">
    <property type="entry name" value="Elongation factor Ts (EF-Ts), dimerisation domain"/>
    <property type="match status" value="1"/>
</dbReference>
<dbReference type="SUPFAM" id="SSF46934">
    <property type="entry name" value="UBA-like"/>
    <property type="match status" value="1"/>
</dbReference>
<name>EFTS_CLAM3</name>
<reference key="1">
    <citation type="journal article" date="2008" name="J. Bacteriol.">
        <title>The genome sequence of the tomato-pathogenic actinomycete Clavibacter michiganensis subsp. michiganensis NCPPB382 reveals a large island involved in pathogenicity.</title>
        <authorList>
            <person name="Gartemann K.-H."/>
            <person name="Abt B."/>
            <person name="Bekel T."/>
            <person name="Burger A."/>
            <person name="Engemann J."/>
            <person name="Fluegel M."/>
            <person name="Gaigalat L."/>
            <person name="Goesmann A."/>
            <person name="Graefen I."/>
            <person name="Kalinowski J."/>
            <person name="Kaup O."/>
            <person name="Kirchner O."/>
            <person name="Krause L."/>
            <person name="Linke B."/>
            <person name="McHardy A."/>
            <person name="Meyer F."/>
            <person name="Pohle S."/>
            <person name="Rueckert C."/>
            <person name="Schneiker S."/>
            <person name="Zellermann E.-M."/>
            <person name="Puehler A."/>
            <person name="Eichenlaub R."/>
            <person name="Kaiser O."/>
            <person name="Bartels D."/>
        </authorList>
    </citation>
    <scope>NUCLEOTIDE SEQUENCE [LARGE SCALE GENOMIC DNA]</scope>
    <source>
        <strain>NCPPB 382</strain>
    </source>
</reference>
<organism>
    <name type="scientific">Clavibacter michiganensis subsp. michiganensis (strain NCPPB 382)</name>
    <dbReference type="NCBI Taxonomy" id="443906"/>
    <lineage>
        <taxon>Bacteria</taxon>
        <taxon>Bacillati</taxon>
        <taxon>Actinomycetota</taxon>
        <taxon>Actinomycetes</taxon>
        <taxon>Micrococcales</taxon>
        <taxon>Microbacteriaceae</taxon>
        <taxon>Clavibacter</taxon>
    </lineage>
</organism>
<comment type="function">
    <text evidence="1">Associates with the EF-Tu.GDP complex and induces the exchange of GDP to GTP. It remains bound to the aminoacyl-tRNA.EF-Tu.GTP complex up to the GTP hydrolysis stage on the ribosome.</text>
</comment>
<comment type="subcellular location">
    <subcellularLocation>
        <location evidence="1">Cytoplasm</location>
    </subcellularLocation>
</comment>
<comment type="similarity">
    <text evidence="1">Belongs to the EF-Ts family.</text>
</comment>
<accession>A5CQS1</accession>
<protein>
    <recommendedName>
        <fullName evidence="1">Elongation factor Ts</fullName>
        <shortName evidence="1">EF-Ts</shortName>
    </recommendedName>
</protein>
<gene>
    <name evidence="1" type="primary">tsf</name>
    <name type="ordered locus">CMM_1384</name>
</gene>
<sequence length="275" mass="29287">MANFTAADVKELRDRLGAGMMDSKNALVEADGDIEKAIEILRLKGQKGNAKRGDRSTAEGLVAASTQDGAATLIELACETDFVAKNDKFIALSESVLAAVVAAGASTVEEALQAPAGEQTVDQLISDQAAILGEKIALRRVARLAGEHQEVYLHRTSKDLPPQVGVVVDYSGTDAETARSIAQHIAFANPEYLAREDVPADKVEAERAIVTEISRNEGKPEAALPKIIEGRLTGFFKQVALLEQDYAKDNKQSVKKVVEAAGLTVTGFARFKVGA</sequence>